<accession>P0CAE7</accession>
<gene>
    <name type="ordered locus">Ken-117</name>
</gene>
<organism>
    <name type="scientific">African swine fever virus (isolate Pig/Kenya/KEN-50/1950)</name>
    <name type="common">ASFV</name>
    <dbReference type="NCBI Taxonomy" id="561445"/>
    <lineage>
        <taxon>Viruses</taxon>
        <taxon>Varidnaviria</taxon>
        <taxon>Bamfordvirae</taxon>
        <taxon>Nucleocytoviricota</taxon>
        <taxon>Pokkesviricetes</taxon>
        <taxon>Asfuvirales</taxon>
        <taxon>Asfarviridae</taxon>
        <taxon>Asfivirus</taxon>
        <taxon>African swine fever virus</taxon>
    </lineage>
</organism>
<feature type="chain" id="PRO_0000373654" description="DNA-directed RNA polymerase RPB7 homolog">
    <location>
        <begin position="1"/>
        <end position="335"/>
    </location>
</feature>
<proteinExistence type="inferred from homology"/>
<name>RPB7_ASFK5</name>
<dbReference type="EMBL" id="AY261360">
    <property type="status" value="NOT_ANNOTATED_CDS"/>
    <property type="molecule type" value="Genomic_DNA"/>
</dbReference>
<dbReference type="SMR" id="P0CAE7"/>
<dbReference type="Proteomes" id="UP000000861">
    <property type="component" value="Segment"/>
</dbReference>
<dbReference type="GO" id="GO:0000428">
    <property type="term" value="C:DNA-directed RNA polymerase complex"/>
    <property type="evidence" value="ECO:0007669"/>
    <property type="project" value="UniProtKB-KW"/>
</dbReference>
<dbReference type="GO" id="GO:0030430">
    <property type="term" value="C:host cell cytoplasm"/>
    <property type="evidence" value="ECO:0007669"/>
    <property type="project" value="UniProtKB-SubCell"/>
</dbReference>
<dbReference type="GO" id="GO:0044423">
    <property type="term" value="C:virion component"/>
    <property type="evidence" value="ECO:0007669"/>
    <property type="project" value="UniProtKB-KW"/>
</dbReference>
<dbReference type="GO" id="GO:0019083">
    <property type="term" value="P:viral transcription"/>
    <property type="evidence" value="ECO:0007669"/>
    <property type="project" value="UniProtKB-KW"/>
</dbReference>
<keyword id="KW-0240">DNA-directed RNA polymerase</keyword>
<keyword id="KW-1035">Host cytoplasm</keyword>
<keyword id="KW-0804">Transcription</keyword>
<keyword id="KW-1195">Viral transcription</keyword>
<keyword id="KW-0946">Virion</keyword>
<comment type="function">
    <text evidence="1">Component of the DNA-directed RNA polymerase (RNAP) that catalyzes the transcription in the cytoplasm of viral DNA into RNA using the four ribonucleoside triphosphates as substrates.</text>
</comment>
<comment type="subunit">
    <text evidence="2">Part of the viral DNA-directed RNA polymerase that consists of 8 polII-like subunits (RPB1, RPB2, RPB3, RPB5, RPB6, RPB7, RPB9, RPB10), a capping enzyme and a termination factor.</text>
</comment>
<comment type="subcellular location">
    <subcellularLocation>
        <location evidence="3">Host cytoplasm</location>
    </subcellularLocation>
    <subcellularLocation>
        <location>Virion</location>
    </subcellularLocation>
    <text evidence="2">Found in association with viral nucleoid.</text>
</comment>
<comment type="induction">
    <text evidence="2">Expressed in the early phase of the viral replicative cycle.</text>
</comment>
<comment type="domain">
    <text evidence="2">Contains an extended C-terminus, with no homology to characterized proteins.</text>
</comment>
<comment type="similarity">
    <text evidence="3">Belongs to the Asfivirus DNA-directed RNA polymerase RPB7 homolog family.</text>
</comment>
<evidence type="ECO:0000250" key="1">
    <source>
        <dbReference type="UniProtKB" id="P62487"/>
    </source>
</evidence>
<evidence type="ECO:0000250" key="2">
    <source>
        <dbReference type="UniProtKB" id="Q89907"/>
    </source>
</evidence>
<evidence type="ECO:0000305" key="3"/>
<reference key="1">
    <citation type="submission" date="2003-03" db="EMBL/GenBank/DDBJ databases">
        <title>African swine fever virus genomes.</title>
        <authorList>
            <person name="Kutish G.F."/>
            <person name="Rock D.L."/>
        </authorList>
    </citation>
    <scope>NUCLEOTIDE SEQUENCE [LARGE SCALE GENOMIC DNA]</scope>
</reference>
<organismHost>
    <name type="scientific">Ornithodoros</name>
    <name type="common">relapsing fever ticks</name>
    <dbReference type="NCBI Taxonomy" id="6937"/>
</organismHost>
<organismHost>
    <name type="scientific">Phacochoerus aethiopicus</name>
    <name type="common">Warthog</name>
    <dbReference type="NCBI Taxonomy" id="85517"/>
</organismHost>
<organismHost>
    <name type="scientific">Phacochoerus africanus</name>
    <name type="common">Warthog</name>
    <dbReference type="NCBI Taxonomy" id="41426"/>
</organismHost>
<organismHost>
    <name type="scientific">Potamochoerus larvatus</name>
    <name type="common">Bushpig</name>
    <dbReference type="NCBI Taxonomy" id="273792"/>
</organismHost>
<organismHost>
    <name type="scientific">Sus scrofa</name>
    <name type="common">Pig</name>
    <dbReference type="NCBI Taxonomy" id="9823"/>
</organismHost>
<protein>
    <recommendedName>
        <fullName evidence="2">DNA-directed RNA polymerase RPB7 homolog</fullName>
        <shortName evidence="3">RPB7 homolog</shortName>
    </recommendedName>
</protein>
<sequence length="335" mass="38270">MIDQKIFEITLNIDDPANFCTNVEAHLLKELENIYVGKCFKNSFIISITGVIQRSPCFIMRTNNSGRGYMHVRFSALVSYLNAFDLIAAVKIIKNDNNIILGESLLTEPVTIVIPSSESQNNVAEVGQIVPVQLANSSVYYIPGRQQASATGSIFIPKHTFSVYHVQEELTQEQALNLTKLVNVIETLLDSRSKKDFKHICFFEKLYYTYPISSDEILDLKIWKGPKGKEVSRLKPCNVLSFLYDALKNKSSSLGFWARPPDLFKSSPLAYQQDNNSFNTTELPIICSAEVMFVTLLKEIINYLQFMNDLCDTFNNEQLIKRHENIWMLIEQRKI</sequence>